<protein>
    <recommendedName>
        <fullName>Probable protein arginine N-methyltransferase 3</fullName>
        <ecNumber evidence="1">2.1.1.319</ecNumber>
    </recommendedName>
</protein>
<proteinExistence type="inferred from homology"/>
<reference key="1">
    <citation type="journal article" date="2005" name="PLoS Biol.">
        <title>The genomes of Oryza sativa: a history of duplications.</title>
        <authorList>
            <person name="Yu J."/>
            <person name="Wang J."/>
            <person name="Lin W."/>
            <person name="Li S."/>
            <person name="Li H."/>
            <person name="Zhou J."/>
            <person name="Ni P."/>
            <person name="Dong W."/>
            <person name="Hu S."/>
            <person name="Zeng C."/>
            <person name="Zhang J."/>
            <person name="Zhang Y."/>
            <person name="Li R."/>
            <person name="Xu Z."/>
            <person name="Li S."/>
            <person name="Li X."/>
            <person name="Zheng H."/>
            <person name="Cong L."/>
            <person name="Lin L."/>
            <person name="Yin J."/>
            <person name="Geng J."/>
            <person name="Li G."/>
            <person name="Shi J."/>
            <person name="Liu J."/>
            <person name="Lv H."/>
            <person name="Li J."/>
            <person name="Wang J."/>
            <person name="Deng Y."/>
            <person name="Ran L."/>
            <person name="Shi X."/>
            <person name="Wang X."/>
            <person name="Wu Q."/>
            <person name="Li C."/>
            <person name="Ren X."/>
            <person name="Wang J."/>
            <person name="Wang X."/>
            <person name="Li D."/>
            <person name="Liu D."/>
            <person name="Zhang X."/>
            <person name="Ji Z."/>
            <person name="Zhao W."/>
            <person name="Sun Y."/>
            <person name="Zhang Z."/>
            <person name="Bao J."/>
            <person name="Han Y."/>
            <person name="Dong L."/>
            <person name="Ji J."/>
            <person name="Chen P."/>
            <person name="Wu S."/>
            <person name="Liu J."/>
            <person name="Xiao Y."/>
            <person name="Bu D."/>
            <person name="Tan J."/>
            <person name="Yang L."/>
            <person name="Ye C."/>
            <person name="Zhang J."/>
            <person name="Xu J."/>
            <person name="Zhou Y."/>
            <person name="Yu Y."/>
            <person name="Zhang B."/>
            <person name="Zhuang S."/>
            <person name="Wei H."/>
            <person name="Liu B."/>
            <person name="Lei M."/>
            <person name="Yu H."/>
            <person name="Li Y."/>
            <person name="Xu H."/>
            <person name="Wei S."/>
            <person name="He X."/>
            <person name="Fang L."/>
            <person name="Zhang Z."/>
            <person name="Zhang Y."/>
            <person name="Huang X."/>
            <person name="Su Z."/>
            <person name="Tong W."/>
            <person name="Li J."/>
            <person name="Tong Z."/>
            <person name="Li S."/>
            <person name="Ye J."/>
            <person name="Wang L."/>
            <person name="Fang L."/>
            <person name="Lei T."/>
            <person name="Chen C.-S."/>
            <person name="Chen H.-C."/>
            <person name="Xu Z."/>
            <person name="Li H."/>
            <person name="Huang H."/>
            <person name="Zhang F."/>
            <person name="Xu H."/>
            <person name="Li N."/>
            <person name="Zhao C."/>
            <person name="Li S."/>
            <person name="Dong L."/>
            <person name="Huang Y."/>
            <person name="Li L."/>
            <person name="Xi Y."/>
            <person name="Qi Q."/>
            <person name="Li W."/>
            <person name="Zhang B."/>
            <person name="Hu W."/>
            <person name="Zhang Y."/>
            <person name="Tian X."/>
            <person name="Jiao Y."/>
            <person name="Liang X."/>
            <person name="Jin J."/>
            <person name="Gao L."/>
            <person name="Zheng W."/>
            <person name="Hao B."/>
            <person name="Liu S.-M."/>
            <person name="Wang W."/>
            <person name="Yuan L."/>
            <person name="Cao M."/>
            <person name="McDermott J."/>
            <person name="Samudrala R."/>
            <person name="Wang J."/>
            <person name="Wong G.K.-S."/>
            <person name="Yang H."/>
        </authorList>
    </citation>
    <scope>NUCLEOTIDE SEQUENCE [LARGE SCALE GENOMIC DNA]</scope>
    <source>
        <strain>cv. 93-11</strain>
    </source>
</reference>
<keyword id="KW-0963">Cytoplasm</keyword>
<keyword id="KW-0479">Metal-binding</keyword>
<keyword id="KW-0489">Methyltransferase</keyword>
<keyword id="KW-1185">Reference proteome</keyword>
<keyword id="KW-0677">Repeat</keyword>
<keyword id="KW-0949">S-adenosyl-L-methionine</keyword>
<keyword id="KW-0808">Transferase</keyword>
<keyword id="KW-0862">Zinc</keyword>
<keyword id="KW-0863">Zinc-finger</keyword>
<feature type="chain" id="PRO_0000293991" description="Probable protein arginine N-methyltransferase 3">
    <location>
        <begin position="1"/>
        <end position="620"/>
    </location>
</feature>
<feature type="domain" description="SAM-dependent MTase PRMT-type" evidence="3">
    <location>
        <begin position="253"/>
        <end position="582"/>
    </location>
</feature>
<feature type="zinc finger region" description="C2H2-type 1">
    <location>
        <begin position="55"/>
        <end position="78"/>
    </location>
</feature>
<feature type="zinc finger region" description="C2H2-type 2; degenerate">
    <location>
        <begin position="110"/>
        <end position="137"/>
    </location>
</feature>
<feature type="region of interest" description="Disordered" evidence="4">
    <location>
        <begin position="1"/>
        <end position="45"/>
    </location>
</feature>
<feature type="compositionally biased region" description="Basic and acidic residues" evidence="4">
    <location>
        <begin position="1"/>
        <end position="17"/>
    </location>
</feature>
<feature type="compositionally biased region" description="Acidic residues" evidence="4">
    <location>
        <begin position="18"/>
        <end position="45"/>
    </location>
</feature>
<feature type="active site" evidence="2">
    <location>
        <position position="383"/>
    </location>
</feature>
<feature type="active site" evidence="2">
    <location>
        <position position="392"/>
    </location>
</feature>
<feature type="binding site" evidence="2">
    <location>
        <position position="275"/>
    </location>
    <ligand>
        <name>S-adenosyl-L-homocysteine</name>
        <dbReference type="ChEBI" id="CHEBI:57856"/>
    </ligand>
</feature>
<feature type="binding site" evidence="2">
    <location>
        <position position="299"/>
    </location>
    <ligand>
        <name>S-adenosyl-L-homocysteine</name>
        <dbReference type="ChEBI" id="CHEBI:57856"/>
    </ligand>
</feature>
<feature type="binding site" evidence="2">
    <location>
        <position position="321"/>
    </location>
    <ligand>
        <name>S-adenosyl-L-homocysteine</name>
        <dbReference type="ChEBI" id="CHEBI:57856"/>
    </ligand>
</feature>
<feature type="binding site" evidence="2">
    <location>
        <position position="323"/>
    </location>
    <ligand>
        <name>S-adenosyl-L-homocysteine</name>
        <dbReference type="ChEBI" id="CHEBI:57856"/>
    </ligand>
</feature>
<feature type="binding site" evidence="2">
    <location>
        <position position="364"/>
    </location>
    <ligand>
        <name>S-adenosyl-L-homocysteine</name>
        <dbReference type="ChEBI" id="CHEBI:57856"/>
    </ligand>
</feature>
<evidence type="ECO:0000250" key="1">
    <source>
        <dbReference type="UniProtKB" id="O60678"/>
    </source>
</evidence>
<evidence type="ECO:0000250" key="2">
    <source>
        <dbReference type="UniProtKB" id="O70467"/>
    </source>
</evidence>
<evidence type="ECO:0000255" key="3">
    <source>
        <dbReference type="PROSITE-ProRule" id="PRU01015"/>
    </source>
</evidence>
<evidence type="ECO:0000256" key="4">
    <source>
        <dbReference type="SAM" id="MobiDB-lite"/>
    </source>
</evidence>
<dbReference type="EC" id="2.1.1.319" evidence="1"/>
<dbReference type="EMBL" id="CM000132">
    <property type="protein sequence ID" value="EAZ04867.1"/>
    <property type="molecule type" value="Genomic_DNA"/>
</dbReference>
<dbReference type="SMR" id="A2YP56"/>
<dbReference type="STRING" id="39946.A2YP56"/>
<dbReference type="EnsemblPlants" id="BGIOSGA026235-TA">
    <property type="protein sequence ID" value="BGIOSGA026235-PA"/>
    <property type="gene ID" value="BGIOSGA026235"/>
</dbReference>
<dbReference type="Gramene" id="BGIOSGA026235-TA">
    <property type="protein sequence ID" value="BGIOSGA026235-PA"/>
    <property type="gene ID" value="BGIOSGA026235"/>
</dbReference>
<dbReference type="HOGENOM" id="CLU_017375_6_1_1"/>
<dbReference type="OMA" id="YSHFAIH"/>
<dbReference type="OrthoDB" id="1733332at2759"/>
<dbReference type="Proteomes" id="UP000007015">
    <property type="component" value="Chromosome 7"/>
</dbReference>
<dbReference type="GO" id="GO:0005829">
    <property type="term" value="C:cytosol"/>
    <property type="evidence" value="ECO:0007669"/>
    <property type="project" value="UniProtKB-SubCell"/>
</dbReference>
<dbReference type="GO" id="GO:0005634">
    <property type="term" value="C:nucleus"/>
    <property type="evidence" value="ECO:0007669"/>
    <property type="project" value="TreeGrafter"/>
</dbReference>
<dbReference type="GO" id="GO:0042054">
    <property type="term" value="F:histone methyltransferase activity"/>
    <property type="evidence" value="ECO:0007669"/>
    <property type="project" value="TreeGrafter"/>
</dbReference>
<dbReference type="GO" id="GO:0035242">
    <property type="term" value="F:protein-arginine omega-N asymmetric methyltransferase activity"/>
    <property type="evidence" value="ECO:0007669"/>
    <property type="project" value="RHEA"/>
</dbReference>
<dbReference type="GO" id="GO:0035241">
    <property type="term" value="F:protein-arginine omega-N monomethyltransferase activity"/>
    <property type="evidence" value="ECO:0007669"/>
    <property type="project" value="RHEA"/>
</dbReference>
<dbReference type="GO" id="GO:0000976">
    <property type="term" value="F:transcription cis-regulatory region binding"/>
    <property type="evidence" value="ECO:0007669"/>
    <property type="project" value="EnsemblPlants"/>
</dbReference>
<dbReference type="GO" id="GO:0008270">
    <property type="term" value="F:zinc ion binding"/>
    <property type="evidence" value="ECO:0007669"/>
    <property type="project" value="UniProtKB-KW"/>
</dbReference>
<dbReference type="GO" id="GO:0032259">
    <property type="term" value="P:methylation"/>
    <property type="evidence" value="ECO:0007669"/>
    <property type="project" value="UniProtKB-KW"/>
</dbReference>
<dbReference type="CDD" id="cd02440">
    <property type="entry name" value="AdoMet_MTases"/>
    <property type="match status" value="1"/>
</dbReference>
<dbReference type="FunFam" id="2.70.160.11:FF:000015">
    <property type="entry name" value="Probable protein arginine N-methyltransferase 3"/>
    <property type="match status" value="1"/>
</dbReference>
<dbReference type="FunFam" id="3.40.50.150:FF:000016">
    <property type="entry name" value="Protein arginine N-methyltransferase 6"/>
    <property type="match status" value="1"/>
</dbReference>
<dbReference type="Gene3D" id="2.70.160.11">
    <property type="entry name" value="Hnrnp arginine n-methyltransferase1"/>
    <property type="match status" value="1"/>
</dbReference>
<dbReference type="Gene3D" id="3.40.50.150">
    <property type="entry name" value="Vaccinia Virus protein VP39"/>
    <property type="match status" value="1"/>
</dbReference>
<dbReference type="InterPro" id="IPR049482">
    <property type="entry name" value="ANM3-like_C2H2_Zf"/>
</dbReference>
<dbReference type="InterPro" id="IPR025799">
    <property type="entry name" value="Arg_MeTrfase"/>
</dbReference>
<dbReference type="InterPro" id="IPR041698">
    <property type="entry name" value="Methyltransf_25"/>
</dbReference>
<dbReference type="InterPro" id="IPR055135">
    <property type="entry name" value="PRMT_dom"/>
</dbReference>
<dbReference type="InterPro" id="IPR029063">
    <property type="entry name" value="SAM-dependent_MTases_sf"/>
</dbReference>
<dbReference type="InterPro" id="IPR036236">
    <property type="entry name" value="Znf_C2H2_sf"/>
</dbReference>
<dbReference type="InterPro" id="IPR013087">
    <property type="entry name" value="Znf_C2H2_type"/>
</dbReference>
<dbReference type="PANTHER" id="PTHR11006">
    <property type="entry name" value="PROTEIN ARGININE N-METHYLTRANSFERASE"/>
    <property type="match status" value="1"/>
</dbReference>
<dbReference type="PANTHER" id="PTHR11006:SF89">
    <property type="entry name" value="PROTEIN ARGININE N-METHYLTRANSFERASE 3-RELATED"/>
    <property type="match status" value="1"/>
</dbReference>
<dbReference type="Pfam" id="PF21137">
    <property type="entry name" value="ANM3_C2H2_Zf"/>
    <property type="match status" value="1"/>
</dbReference>
<dbReference type="Pfam" id="PF13649">
    <property type="entry name" value="Methyltransf_25"/>
    <property type="match status" value="1"/>
</dbReference>
<dbReference type="Pfam" id="PF22528">
    <property type="entry name" value="PRMT_C"/>
    <property type="match status" value="1"/>
</dbReference>
<dbReference type="SUPFAM" id="SSF57667">
    <property type="entry name" value="beta-beta-alpha zinc fingers"/>
    <property type="match status" value="1"/>
</dbReference>
<dbReference type="SUPFAM" id="SSF53335">
    <property type="entry name" value="S-adenosyl-L-methionine-dependent methyltransferases"/>
    <property type="match status" value="1"/>
</dbReference>
<dbReference type="PROSITE" id="PS51678">
    <property type="entry name" value="SAM_MT_PRMT"/>
    <property type="match status" value="1"/>
</dbReference>
<dbReference type="PROSITE" id="PS00028">
    <property type="entry name" value="ZINC_FINGER_C2H2_1"/>
    <property type="match status" value="1"/>
</dbReference>
<organism>
    <name type="scientific">Oryza sativa subsp. indica</name>
    <name type="common">Rice</name>
    <dbReference type="NCBI Taxonomy" id="39946"/>
    <lineage>
        <taxon>Eukaryota</taxon>
        <taxon>Viridiplantae</taxon>
        <taxon>Streptophyta</taxon>
        <taxon>Embryophyta</taxon>
        <taxon>Tracheophyta</taxon>
        <taxon>Spermatophyta</taxon>
        <taxon>Magnoliopsida</taxon>
        <taxon>Liliopsida</taxon>
        <taxon>Poales</taxon>
        <taxon>Poaceae</taxon>
        <taxon>BOP clade</taxon>
        <taxon>Oryzoideae</taxon>
        <taxon>Oryzeae</taxon>
        <taxon>Oryzinae</taxon>
        <taxon>Oryza</taxon>
        <taxon>Oryza sativa</taxon>
    </lineage>
</organism>
<accession>A2YP56</accession>
<gene>
    <name type="primary">PRMT3</name>
    <name type="ORF">OsI_026099</name>
</gene>
<comment type="function">
    <text evidence="1">Protein-arginine N-methyltransferase that catalyzes both the monomethylation and asymmetric dimethylation of the guanidino nitrogens of arginine residues in target proteins, and therefore falls into the group of type I methyltransferases.</text>
</comment>
<comment type="catalytic activity">
    <reaction evidence="1">
        <text>L-arginyl-[protein] + S-adenosyl-L-methionine = N(omega)-methyl-L-arginyl-[protein] + S-adenosyl-L-homocysteine + H(+)</text>
        <dbReference type="Rhea" id="RHEA:48100"/>
        <dbReference type="Rhea" id="RHEA-COMP:10532"/>
        <dbReference type="Rhea" id="RHEA-COMP:11990"/>
        <dbReference type="ChEBI" id="CHEBI:15378"/>
        <dbReference type="ChEBI" id="CHEBI:29965"/>
        <dbReference type="ChEBI" id="CHEBI:57856"/>
        <dbReference type="ChEBI" id="CHEBI:59789"/>
        <dbReference type="ChEBI" id="CHEBI:65280"/>
    </reaction>
    <physiologicalReaction direction="left-to-right" evidence="1">
        <dbReference type="Rhea" id="RHEA:48101"/>
    </physiologicalReaction>
</comment>
<comment type="catalytic activity">
    <reaction evidence="1">
        <text>L-arginyl-[protein] + 2 S-adenosyl-L-methionine = N(omega),N(omega)-dimethyl-L-arginyl-[protein] + 2 S-adenosyl-L-homocysteine + 2 H(+)</text>
        <dbReference type="Rhea" id="RHEA:48096"/>
        <dbReference type="Rhea" id="RHEA-COMP:10532"/>
        <dbReference type="Rhea" id="RHEA-COMP:11991"/>
        <dbReference type="ChEBI" id="CHEBI:15378"/>
        <dbReference type="ChEBI" id="CHEBI:29965"/>
        <dbReference type="ChEBI" id="CHEBI:57856"/>
        <dbReference type="ChEBI" id="CHEBI:59789"/>
        <dbReference type="ChEBI" id="CHEBI:61897"/>
        <dbReference type="EC" id="2.1.1.319"/>
    </reaction>
    <physiologicalReaction direction="left-to-right" evidence="1">
        <dbReference type="Rhea" id="RHEA:48097"/>
    </physiologicalReaction>
</comment>
<comment type="subcellular location">
    <subcellularLocation>
        <location evidence="1">Cytoplasm</location>
        <location evidence="1">Cytosol</location>
    </subcellularLocation>
</comment>
<comment type="domain">
    <text evidence="2">The C2H2-type zinc-finger is responsible for substrate specificity.</text>
</comment>
<comment type="similarity">
    <text evidence="3">Belongs to the class I-like SAM-binding methyltransferase superfamily. Protein arginine N-methyltransferase family.</text>
</comment>
<name>ANM3_ORYSI</name>
<sequence>MATREHELRPEQERLGEDREEYEDGEEEEEEEEEEEGWDDWESDGDDAGGGGGGLLCLFCSARFDSESSLFSHCASEHRFDFYRVVKETGMDFYGCIKLINFVRSKVAENKCWSCGQVFSSNSELCGHLHALEIPQLEGKVPWGDDVYLKPFLEDDSLLHSLSVFDDDDEDDCGMPMEKGGCSAGNGSLAETCESNLKSIINDGSDVIDRFERTCTIESTDGECSGSLAQEPSDKQLKIARASAAARGINSVDESYFGSYSSFGIHREMLGDKVRTEAYRDALLGNPSLMNGATVLDVGCGTGILSLFAAKAGASRVIAVDGSAKMVSVATEVTKSNGFLYDENMEMQQKRDTQVITVVHTKAEELNHKIQVPSNKFDVLVSEWMGYCLLYESMLSSVLYARDHFLKPGGAILPDTATIFGAGFGKGGTSLPFWENVYGFDMSCIGKEVTGNSARFPVVDILASEDIVTETAVLNSFDLATMKENEMDFTSSFELRLSESGVSPSGVTWCYGIILWFDTGFTNRFCKEKPVNLSTSPFSTPTHWSQTIFTFEEPIAMAKEESAVVSSASVGTDECPAVMIRSRISIVRASEHRSIDISIETTGISSDGRKRSWPVQIFNL</sequence>